<protein>
    <recommendedName>
        <fullName evidence="1">GTPase Der</fullName>
    </recommendedName>
    <alternativeName>
        <fullName evidence="1">GTP-binding protein EngA</fullName>
    </alternativeName>
</protein>
<gene>
    <name evidence="1" type="primary">der</name>
    <name type="synonym">engA</name>
    <name type="ordered locus">CYB_1263</name>
</gene>
<feature type="chain" id="PRO_1000011766" description="GTPase Der">
    <location>
        <begin position="1"/>
        <end position="459"/>
    </location>
</feature>
<feature type="domain" description="EngA-type G 1">
    <location>
        <begin position="4"/>
        <end position="169"/>
    </location>
</feature>
<feature type="domain" description="EngA-type G 2">
    <location>
        <begin position="179"/>
        <end position="355"/>
    </location>
</feature>
<feature type="domain" description="KH-like" evidence="1">
    <location>
        <begin position="356"/>
        <end position="441"/>
    </location>
</feature>
<feature type="binding site" evidence="1">
    <location>
        <begin position="10"/>
        <end position="17"/>
    </location>
    <ligand>
        <name>GTP</name>
        <dbReference type="ChEBI" id="CHEBI:37565"/>
        <label>1</label>
    </ligand>
</feature>
<feature type="binding site" evidence="1">
    <location>
        <begin position="57"/>
        <end position="61"/>
    </location>
    <ligand>
        <name>GTP</name>
        <dbReference type="ChEBI" id="CHEBI:37565"/>
        <label>1</label>
    </ligand>
</feature>
<feature type="binding site" evidence="1">
    <location>
        <begin position="120"/>
        <end position="123"/>
    </location>
    <ligand>
        <name>GTP</name>
        <dbReference type="ChEBI" id="CHEBI:37565"/>
        <label>1</label>
    </ligand>
</feature>
<feature type="binding site" evidence="1">
    <location>
        <begin position="185"/>
        <end position="192"/>
    </location>
    <ligand>
        <name>GTP</name>
        <dbReference type="ChEBI" id="CHEBI:37565"/>
        <label>2</label>
    </ligand>
</feature>
<feature type="binding site" evidence="1">
    <location>
        <begin position="232"/>
        <end position="236"/>
    </location>
    <ligand>
        <name>GTP</name>
        <dbReference type="ChEBI" id="CHEBI:37565"/>
        <label>2</label>
    </ligand>
</feature>
<feature type="binding site" evidence="1">
    <location>
        <begin position="297"/>
        <end position="300"/>
    </location>
    <ligand>
        <name>GTP</name>
        <dbReference type="ChEBI" id="CHEBI:37565"/>
        <label>2</label>
    </ligand>
</feature>
<comment type="function">
    <text evidence="1">GTPase that plays an essential role in the late steps of ribosome biogenesis.</text>
</comment>
<comment type="subunit">
    <text evidence="1">Associates with the 50S ribosomal subunit.</text>
</comment>
<comment type="similarity">
    <text evidence="1">Belongs to the TRAFAC class TrmE-Era-EngA-EngB-Septin-like GTPase superfamily. EngA (Der) GTPase family.</text>
</comment>
<dbReference type="EMBL" id="CP000240">
    <property type="protein sequence ID" value="ABD02238.1"/>
    <property type="molecule type" value="Genomic_DNA"/>
</dbReference>
<dbReference type="RefSeq" id="WP_011432890.1">
    <property type="nucleotide sequence ID" value="NC_007776.1"/>
</dbReference>
<dbReference type="SMR" id="Q2JM09"/>
<dbReference type="STRING" id="321332.CYB_1263"/>
<dbReference type="KEGG" id="cyb:CYB_1263"/>
<dbReference type="eggNOG" id="COG1160">
    <property type="taxonomic scope" value="Bacteria"/>
</dbReference>
<dbReference type="HOGENOM" id="CLU_016077_6_2_3"/>
<dbReference type="OrthoDB" id="9805918at2"/>
<dbReference type="Proteomes" id="UP000001938">
    <property type="component" value="Chromosome"/>
</dbReference>
<dbReference type="GO" id="GO:0016887">
    <property type="term" value="F:ATP hydrolysis activity"/>
    <property type="evidence" value="ECO:0007669"/>
    <property type="project" value="InterPro"/>
</dbReference>
<dbReference type="GO" id="GO:0005525">
    <property type="term" value="F:GTP binding"/>
    <property type="evidence" value="ECO:0007669"/>
    <property type="project" value="UniProtKB-UniRule"/>
</dbReference>
<dbReference type="GO" id="GO:0043022">
    <property type="term" value="F:ribosome binding"/>
    <property type="evidence" value="ECO:0007669"/>
    <property type="project" value="TreeGrafter"/>
</dbReference>
<dbReference type="GO" id="GO:0042254">
    <property type="term" value="P:ribosome biogenesis"/>
    <property type="evidence" value="ECO:0007669"/>
    <property type="project" value="UniProtKB-KW"/>
</dbReference>
<dbReference type="CDD" id="cd01894">
    <property type="entry name" value="EngA1"/>
    <property type="match status" value="1"/>
</dbReference>
<dbReference type="CDD" id="cd01895">
    <property type="entry name" value="EngA2"/>
    <property type="match status" value="1"/>
</dbReference>
<dbReference type="FunFam" id="3.30.300.20:FF:000004">
    <property type="entry name" value="GTPase Der"/>
    <property type="match status" value="1"/>
</dbReference>
<dbReference type="FunFam" id="3.40.50.300:FF:000040">
    <property type="entry name" value="GTPase Der"/>
    <property type="match status" value="1"/>
</dbReference>
<dbReference type="FunFam" id="3.40.50.300:FF:000057">
    <property type="entry name" value="GTPase Der"/>
    <property type="match status" value="1"/>
</dbReference>
<dbReference type="Gene3D" id="3.30.300.20">
    <property type="match status" value="1"/>
</dbReference>
<dbReference type="Gene3D" id="3.40.50.300">
    <property type="entry name" value="P-loop containing nucleotide triphosphate hydrolases"/>
    <property type="match status" value="2"/>
</dbReference>
<dbReference type="HAMAP" id="MF_00195">
    <property type="entry name" value="GTPase_Der"/>
    <property type="match status" value="1"/>
</dbReference>
<dbReference type="InterPro" id="IPR003593">
    <property type="entry name" value="AAA+_ATPase"/>
</dbReference>
<dbReference type="InterPro" id="IPR031166">
    <property type="entry name" value="G_ENGA"/>
</dbReference>
<dbReference type="InterPro" id="IPR006073">
    <property type="entry name" value="GTP-bd"/>
</dbReference>
<dbReference type="InterPro" id="IPR016484">
    <property type="entry name" value="GTPase_Der"/>
</dbReference>
<dbReference type="InterPro" id="IPR032859">
    <property type="entry name" value="KH_dom-like"/>
</dbReference>
<dbReference type="InterPro" id="IPR015946">
    <property type="entry name" value="KH_dom-like_a/b"/>
</dbReference>
<dbReference type="InterPro" id="IPR027417">
    <property type="entry name" value="P-loop_NTPase"/>
</dbReference>
<dbReference type="InterPro" id="IPR005225">
    <property type="entry name" value="Small_GTP-bd"/>
</dbReference>
<dbReference type="NCBIfam" id="TIGR03594">
    <property type="entry name" value="GTPase_EngA"/>
    <property type="match status" value="1"/>
</dbReference>
<dbReference type="NCBIfam" id="TIGR00231">
    <property type="entry name" value="small_GTP"/>
    <property type="match status" value="2"/>
</dbReference>
<dbReference type="PANTHER" id="PTHR43834">
    <property type="entry name" value="GTPASE DER"/>
    <property type="match status" value="1"/>
</dbReference>
<dbReference type="PANTHER" id="PTHR43834:SF6">
    <property type="entry name" value="GTPASE DER"/>
    <property type="match status" value="1"/>
</dbReference>
<dbReference type="Pfam" id="PF14714">
    <property type="entry name" value="KH_dom-like"/>
    <property type="match status" value="1"/>
</dbReference>
<dbReference type="Pfam" id="PF01926">
    <property type="entry name" value="MMR_HSR1"/>
    <property type="match status" value="2"/>
</dbReference>
<dbReference type="PIRSF" id="PIRSF006485">
    <property type="entry name" value="GTP-binding_EngA"/>
    <property type="match status" value="1"/>
</dbReference>
<dbReference type="PRINTS" id="PR00326">
    <property type="entry name" value="GTP1OBG"/>
</dbReference>
<dbReference type="SMART" id="SM00382">
    <property type="entry name" value="AAA"/>
    <property type="match status" value="2"/>
</dbReference>
<dbReference type="SUPFAM" id="SSF52540">
    <property type="entry name" value="P-loop containing nucleoside triphosphate hydrolases"/>
    <property type="match status" value="2"/>
</dbReference>
<dbReference type="PROSITE" id="PS51712">
    <property type="entry name" value="G_ENGA"/>
    <property type="match status" value="2"/>
</dbReference>
<organism>
    <name type="scientific">Synechococcus sp. (strain JA-2-3B'a(2-13))</name>
    <name type="common">Cyanobacteria bacterium Yellowstone B-Prime</name>
    <dbReference type="NCBI Taxonomy" id="321332"/>
    <lineage>
        <taxon>Bacteria</taxon>
        <taxon>Bacillati</taxon>
        <taxon>Cyanobacteriota</taxon>
        <taxon>Cyanophyceae</taxon>
        <taxon>Synechococcales</taxon>
        <taxon>Synechococcaceae</taxon>
        <taxon>Synechococcus</taxon>
    </lineage>
</organism>
<name>DER_SYNJB</name>
<evidence type="ECO:0000255" key="1">
    <source>
        <dbReference type="HAMAP-Rule" id="MF_00195"/>
    </source>
</evidence>
<reference key="1">
    <citation type="journal article" date="2007" name="ISME J.">
        <title>Population level functional diversity in a microbial community revealed by comparative genomic and metagenomic analyses.</title>
        <authorList>
            <person name="Bhaya D."/>
            <person name="Grossman A.R."/>
            <person name="Steunou A.-S."/>
            <person name="Khuri N."/>
            <person name="Cohan F.M."/>
            <person name="Hamamura N."/>
            <person name="Melendrez M.C."/>
            <person name="Bateson M.M."/>
            <person name="Ward D.M."/>
            <person name="Heidelberg J.F."/>
        </authorList>
    </citation>
    <scope>NUCLEOTIDE SEQUENCE [LARGE SCALE GENOMIC DNA]</scope>
    <source>
        <strain>JA-2-3B'a(2-13)</strain>
    </source>
</reference>
<accession>Q2JM09</accession>
<proteinExistence type="inferred from homology"/>
<keyword id="KW-0342">GTP-binding</keyword>
<keyword id="KW-0547">Nucleotide-binding</keyword>
<keyword id="KW-1185">Reference proteome</keyword>
<keyword id="KW-0677">Repeat</keyword>
<keyword id="KW-0690">Ribosome biogenesis</keyword>
<sequence>MPLPLVAIVGRPNVGKSTLVNRMAGVRSAIVHDEPGVTRDRLYQEVEWNGRRLRVVDTGGLVFGDDSEFLPHIRQQAMAAMAEAQAVIFVVDGREGLTPADVEVADWLRKQPLPVVVAVNKCESGQMGLAQAAAFWELGLGDPIPCSGIHGNGVAELLEAVLAHLPEVTAEAAGEPDPIAVSIVGRPNVGKSSLLNRLVGSERAIVSPISGTTRDAIDTVVTWEGQPYRLIDTAGIRKKNRVQYGIEFFSINRAFKAIQRSDAVLLVIDALEGVTEQDQRLAGRIEEEGRACVVVVNKWDAVENKDTHTINEFTREIRDRLYFIEWAPLLFVSALTGQRTHKIFEQVNTVVAAHRKRVPTAVVNEVLQDALAWQSPPTNRQGKQGRIYYGTQVADRPPTFVLFVNDPDLFKDNYRRFLEKHFRQNLDFTGTPIRFLWRGKSERLVGRAVRKLERSLTSR</sequence>